<sequence length="146" mass="15785">MLLQGTHRIGRMAMLLALADESESSVLSIPKGWKYCTGKVGSMNSQKVVAAMETAAKSNQVIETDVYRETHALYHAIMEALYGVTRGQIQLADVLRTVGLRFAIVRGTPYDGKKEGEWVAVALYGTIGAPVKGSEHEAIGLGINHI</sequence>
<gene>
    <name evidence="1" type="primary">hutP</name>
    <name type="ordered locus">Bcer98_2313</name>
</gene>
<evidence type="ECO:0000255" key="1">
    <source>
        <dbReference type="HAMAP-Rule" id="MF_00779"/>
    </source>
</evidence>
<name>HUTP_BACCN</name>
<proteinExistence type="inferred from homology"/>
<keyword id="KW-0010">Activator</keyword>
<keyword id="KW-0369">Histidine metabolism</keyword>
<keyword id="KW-0694">RNA-binding</keyword>
<keyword id="KW-0804">Transcription</keyword>
<keyword id="KW-0805">Transcription regulation</keyword>
<organism>
    <name type="scientific">Bacillus cytotoxicus (strain DSM 22905 / CIP 110041 / 391-98 / NVH 391-98)</name>
    <dbReference type="NCBI Taxonomy" id="315749"/>
    <lineage>
        <taxon>Bacteria</taxon>
        <taxon>Bacillati</taxon>
        <taxon>Bacillota</taxon>
        <taxon>Bacilli</taxon>
        <taxon>Bacillales</taxon>
        <taxon>Bacillaceae</taxon>
        <taxon>Bacillus</taxon>
        <taxon>Bacillus cereus group</taxon>
    </lineage>
</organism>
<reference key="1">
    <citation type="journal article" date="2008" name="Chem. Biol. Interact.">
        <title>Extending the Bacillus cereus group genomics to putative food-borne pathogens of different toxicity.</title>
        <authorList>
            <person name="Lapidus A."/>
            <person name="Goltsman E."/>
            <person name="Auger S."/>
            <person name="Galleron N."/>
            <person name="Segurens B."/>
            <person name="Dossat C."/>
            <person name="Land M.L."/>
            <person name="Broussolle V."/>
            <person name="Brillard J."/>
            <person name="Guinebretiere M.-H."/>
            <person name="Sanchis V."/>
            <person name="Nguen-the C."/>
            <person name="Lereclus D."/>
            <person name="Richardson P."/>
            <person name="Wincker P."/>
            <person name="Weissenbach J."/>
            <person name="Ehrlich S.D."/>
            <person name="Sorokin A."/>
        </authorList>
    </citation>
    <scope>NUCLEOTIDE SEQUENCE [LARGE SCALE GENOMIC DNA]</scope>
    <source>
        <strain>DSM 22905 / CIP 110041 / 391-98 / NVH 391-98</strain>
    </source>
</reference>
<feature type="chain" id="PRO_1000148462" description="Hut operon positive regulatory protein">
    <location>
        <begin position="1"/>
        <end position="146"/>
    </location>
</feature>
<dbReference type="EMBL" id="CP000764">
    <property type="protein sequence ID" value="ABS22559.1"/>
    <property type="molecule type" value="Genomic_DNA"/>
</dbReference>
<dbReference type="RefSeq" id="WP_012094755.1">
    <property type="nucleotide sequence ID" value="NC_009674.1"/>
</dbReference>
<dbReference type="SMR" id="A7GR01"/>
<dbReference type="STRING" id="315749.Bcer98_2313"/>
<dbReference type="GeneID" id="33897584"/>
<dbReference type="KEGG" id="bcy:Bcer98_2313"/>
<dbReference type="eggNOG" id="ENOG502ZFIH">
    <property type="taxonomic scope" value="Bacteria"/>
</dbReference>
<dbReference type="HOGENOM" id="CLU_148478_0_0_9"/>
<dbReference type="OrthoDB" id="2388985at2"/>
<dbReference type="Proteomes" id="UP000002300">
    <property type="component" value="Chromosome"/>
</dbReference>
<dbReference type="GO" id="GO:0003729">
    <property type="term" value="F:mRNA binding"/>
    <property type="evidence" value="ECO:0007669"/>
    <property type="project" value="UniProtKB-UniRule"/>
</dbReference>
<dbReference type="GO" id="GO:0006547">
    <property type="term" value="P:L-histidine metabolic process"/>
    <property type="evidence" value="ECO:0007669"/>
    <property type="project" value="UniProtKB-UniRule"/>
</dbReference>
<dbReference type="GO" id="GO:0010628">
    <property type="term" value="P:positive regulation of gene expression"/>
    <property type="evidence" value="ECO:0007669"/>
    <property type="project" value="UniProtKB-UniRule"/>
</dbReference>
<dbReference type="FunFam" id="3.40.1510.10:FF:000001">
    <property type="entry name" value="Hut operon positive regulatory protein"/>
    <property type="match status" value="1"/>
</dbReference>
<dbReference type="Gene3D" id="3.40.1510.10">
    <property type="entry name" value="Hut operon regulatory protein HutP"/>
    <property type="match status" value="1"/>
</dbReference>
<dbReference type="HAMAP" id="MF_00779">
    <property type="entry name" value="HutP"/>
    <property type="match status" value="1"/>
</dbReference>
<dbReference type="InterPro" id="IPR015111">
    <property type="entry name" value="Regulatory_HutP"/>
</dbReference>
<dbReference type="InterPro" id="IPR023552">
    <property type="entry name" value="Regulatory_HutP_bacillales"/>
</dbReference>
<dbReference type="InterPro" id="IPR036482">
    <property type="entry name" value="Regulatory_HutP_sf"/>
</dbReference>
<dbReference type="NCBIfam" id="NF002838">
    <property type="entry name" value="PRK03065.1"/>
    <property type="match status" value="1"/>
</dbReference>
<dbReference type="Pfam" id="PF09021">
    <property type="entry name" value="HutP"/>
    <property type="match status" value="1"/>
</dbReference>
<dbReference type="SUPFAM" id="SSF111064">
    <property type="entry name" value="Hut operon positive regulatory protein HutP"/>
    <property type="match status" value="1"/>
</dbReference>
<protein>
    <recommendedName>
        <fullName evidence="1">Hut operon positive regulatory protein</fullName>
    </recommendedName>
</protein>
<accession>A7GR01</accession>
<comment type="function">
    <text evidence="1">Antiterminator that binds to cis-acting regulatory sequences on the mRNA in the presence of histidine, thereby suppressing transcription termination and activating the hut operon for histidine utilization.</text>
</comment>
<comment type="subunit">
    <text evidence="1">Homohexamer.</text>
</comment>
<comment type="similarity">
    <text evidence="1">Belongs to the HutP family.</text>
</comment>